<accession>C4K2D7</accession>
<name>SYP_RICPU</name>
<protein>
    <recommendedName>
        <fullName evidence="1">Proline--tRNA ligase</fullName>
        <ecNumber evidence="1">6.1.1.15</ecNumber>
    </recommendedName>
    <alternativeName>
        <fullName evidence="1">Prolyl-tRNA synthetase</fullName>
        <shortName evidence="1">ProRS</shortName>
    </alternativeName>
</protein>
<proteinExistence type="inferred from homology"/>
<reference key="1">
    <citation type="journal article" date="2009" name="PLoS ONE">
        <title>Genome sequence of the endosymbiont Rickettsia peacockii and comparison with virulent Rickettsia rickettsii: identification of virulence factors.</title>
        <authorList>
            <person name="Felsheim R.F."/>
            <person name="Kurtti T.J."/>
            <person name="Munderloh U.G."/>
        </authorList>
    </citation>
    <scope>NUCLEOTIDE SEQUENCE [LARGE SCALE GENOMIC DNA]</scope>
    <source>
        <strain>Rustic</strain>
    </source>
</reference>
<dbReference type="EC" id="6.1.1.15" evidence="1"/>
<dbReference type="EMBL" id="CP001227">
    <property type="protein sequence ID" value="ACR47734.1"/>
    <property type="molecule type" value="Genomic_DNA"/>
</dbReference>
<dbReference type="RefSeq" id="WP_012736923.1">
    <property type="nucleotide sequence ID" value="NC_012730.1"/>
</dbReference>
<dbReference type="SMR" id="C4K2D7"/>
<dbReference type="KEGG" id="rpk:RPR_05895"/>
<dbReference type="HOGENOM" id="CLU_016739_4_2_5"/>
<dbReference type="Proteomes" id="UP000005015">
    <property type="component" value="Chromosome"/>
</dbReference>
<dbReference type="GO" id="GO:0005829">
    <property type="term" value="C:cytosol"/>
    <property type="evidence" value="ECO:0007669"/>
    <property type="project" value="TreeGrafter"/>
</dbReference>
<dbReference type="GO" id="GO:0005524">
    <property type="term" value="F:ATP binding"/>
    <property type="evidence" value="ECO:0007669"/>
    <property type="project" value="UniProtKB-UniRule"/>
</dbReference>
<dbReference type="GO" id="GO:0004827">
    <property type="term" value="F:proline-tRNA ligase activity"/>
    <property type="evidence" value="ECO:0007669"/>
    <property type="project" value="UniProtKB-UniRule"/>
</dbReference>
<dbReference type="GO" id="GO:0006433">
    <property type="term" value="P:prolyl-tRNA aminoacylation"/>
    <property type="evidence" value="ECO:0007669"/>
    <property type="project" value="UniProtKB-UniRule"/>
</dbReference>
<dbReference type="CDD" id="cd00861">
    <property type="entry name" value="ProRS_anticodon_short"/>
    <property type="match status" value="1"/>
</dbReference>
<dbReference type="CDD" id="cd00779">
    <property type="entry name" value="ProRS_core_prok"/>
    <property type="match status" value="1"/>
</dbReference>
<dbReference type="FunFam" id="3.30.930.10:FF:000042">
    <property type="entry name" value="probable proline--tRNA ligase, mitochondrial"/>
    <property type="match status" value="1"/>
</dbReference>
<dbReference type="FunFam" id="3.40.50.800:FF:000032">
    <property type="entry name" value="Proline--tRNA ligase"/>
    <property type="match status" value="1"/>
</dbReference>
<dbReference type="Gene3D" id="3.40.50.800">
    <property type="entry name" value="Anticodon-binding domain"/>
    <property type="match status" value="1"/>
</dbReference>
<dbReference type="Gene3D" id="3.30.930.10">
    <property type="entry name" value="Bira Bifunctional Protein, Domain 2"/>
    <property type="match status" value="1"/>
</dbReference>
<dbReference type="HAMAP" id="MF_01570">
    <property type="entry name" value="Pro_tRNA_synth_type2"/>
    <property type="match status" value="1"/>
</dbReference>
<dbReference type="InterPro" id="IPR002314">
    <property type="entry name" value="aa-tRNA-synt_IIb"/>
</dbReference>
<dbReference type="InterPro" id="IPR006195">
    <property type="entry name" value="aa-tRNA-synth_II"/>
</dbReference>
<dbReference type="InterPro" id="IPR045864">
    <property type="entry name" value="aa-tRNA-synth_II/BPL/LPL"/>
</dbReference>
<dbReference type="InterPro" id="IPR004154">
    <property type="entry name" value="Anticodon-bd"/>
</dbReference>
<dbReference type="InterPro" id="IPR036621">
    <property type="entry name" value="Anticodon-bd_dom_sf"/>
</dbReference>
<dbReference type="InterPro" id="IPR002316">
    <property type="entry name" value="Pro-tRNA-ligase_IIa"/>
</dbReference>
<dbReference type="InterPro" id="IPR004500">
    <property type="entry name" value="Pro-tRNA-synth_IIa_bac-type"/>
</dbReference>
<dbReference type="InterPro" id="IPR050062">
    <property type="entry name" value="Pro-tRNA_synthetase"/>
</dbReference>
<dbReference type="InterPro" id="IPR023716">
    <property type="entry name" value="Prolyl-tRNA_ligase_IIa_type2"/>
</dbReference>
<dbReference type="InterPro" id="IPR044140">
    <property type="entry name" value="ProRS_anticodon_short"/>
</dbReference>
<dbReference type="InterPro" id="IPR033730">
    <property type="entry name" value="ProRS_core_prok"/>
</dbReference>
<dbReference type="NCBIfam" id="NF008979">
    <property type="entry name" value="PRK12325.1"/>
    <property type="match status" value="1"/>
</dbReference>
<dbReference type="NCBIfam" id="TIGR00409">
    <property type="entry name" value="proS_fam_II"/>
    <property type="match status" value="1"/>
</dbReference>
<dbReference type="PANTHER" id="PTHR42753">
    <property type="entry name" value="MITOCHONDRIAL RIBOSOME PROTEIN L39/PROLYL-TRNA LIGASE FAMILY MEMBER"/>
    <property type="match status" value="1"/>
</dbReference>
<dbReference type="PANTHER" id="PTHR42753:SF2">
    <property type="entry name" value="PROLINE--TRNA LIGASE"/>
    <property type="match status" value="1"/>
</dbReference>
<dbReference type="Pfam" id="PF03129">
    <property type="entry name" value="HGTP_anticodon"/>
    <property type="match status" value="1"/>
</dbReference>
<dbReference type="Pfam" id="PF00587">
    <property type="entry name" value="tRNA-synt_2b"/>
    <property type="match status" value="1"/>
</dbReference>
<dbReference type="PRINTS" id="PR01046">
    <property type="entry name" value="TRNASYNTHPRO"/>
</dbReference>
<dbReference type="SUPFAM" id="SSF52954">
    <property type="entry name" value="Class II aaRS ABD-related"/>
    <property type="match status" value="1"/>
</dbReference>
<dbReference type="SUPFAM" id="SSF55681">
    <property type="entry name" value="Class II aaRS and biotin synthetases"/>
    <property type="match status" value="1"/>
</dbReference>
<dbReference type="PROSITE" id="PS50862">
    <property type="entry name" value="AA_TRNA_LIGASE_II"/>
    <property type="match status" value="1"/>
</dbReference>
<sequence length="426" mass="48386">MLLSKYFLPVLKEEPSEAQVTSHKLMLRSGMIRQQAAGIYTWLPLGLKVLKNIENIVRLNMNKAGALEVLMPCIQPAHLWMESGRFDNYGKEMLKFQDRHDNTLLFGPTNEDMITDIFRHNIKSYKDLPKNLYHIQWKFRDEIRPRFGVMRGREFLMKDAYSFDINEENAVKTYNQMYKAYINAFRDLGVFAIPVIADNGPIGGNLSHEFHIIAETGESTIYYDKKFKTLKDNPDIDVEEIKSWYAAAEEKYEVNKLPISEQEITSSKGIEVGHIFYIGSKYSVNMNALINDEYGKLTPIEMSSYGIGISRLVAAIIEANCDEKGIIWPSSVAPFKVSLINLNIHDSKCVELAEMAYKELSDKNIEVLYDDTEARPGSKFATHDLIGSPHQIIIGPKKAANNIVALKDRKSGVIEDIEVGSLMSVL</sequence>
<comment type="function">
    <text evidence="1">Catalyzes the attachment of proline to tRNA(Pro) in a two-step reaction: proline is first activated by ATP to form Pro-AMP and then transferred to the acceptor end of tRNA(Pro).</text>
</comment>
<comment type="catalytic activity">
    <reaction evidence="1">
        <text>tRNA(Pro) + L-proline + ATP = L-prolyl-tRNA(Pro) + AMP + diphosphate</text>
        <dbReference type="Rhea" id="RHEA:14305"/>
        <dbReference type="Rhea" id="RHEA-COMP:9700"/>
        <dbReference type="Rhea" id="RHEA-COMP:9702"/>
        <dbReference type="ChEBI" id="CHEBI:30616"/>
        <dbReference type="ChEBI" id="CHEBI:33019"/>
        <dbReference type="ChEBI" id="CHEBI:60039"/>
        <dbReference type="ChEBI" id="CHEBI:78442"/>
        <dbReference type="ChEBI" id="CHEBI:78532"/>
        <dbReference type="ChEBI" id="CHEBI:456215"/>
        <dbReference type="EC" id="6.1.1.15"/>
    </reaction>
</comment>
<comment type="subunit">
    <text evidence="1">Homodimer.</text>
</comment>
<comment type="subcellular location">
    <subcellularLocation>
        <location evidence="1">Cytoplasm</location>
    </subcellularLocation>
</comment>
<comment type="similarity">
    <text evidence="1">Belongs to the class-II aminoacyl-tRNA synthetase family. ProS type 2 subfamily.</text>
</comment>
<evidence type="ECO:0000255" key="1">
    <source>
        <dbReference type="HAMAP-Rule" id="MF_01570"/>
    </source>
</evidence>
<gene>
    <name evidence="1" type="primary">proS</name>
    <name type="ordered locus">RPR_05895</name>
</gene>
<organism>
    <name type="scientific">Rickettsia peacockii (strain Rustic)</name>
    <dbReference type="NCBI Taxonomy" id="562019"/>
    <lineage>
        <taxon>Bacteria</taxon>
        <taxon>Pseudomonadati</taxon>
        <taxon>Pseudomonadota</taxon>
        <taxon>Alphaproteobacteria</taxon>
        <taxon>Rickettsiales</taxon>
        <taxon>Rickettsiaceae</taxon>
        <taxon>Rickettsieae</taxon>
        <taxon>Rickettsia</taxon>
        <taxon>spotted fever group</taxon>
    </lineage>
</organism>
<keyword id="KW-0030">Aminoacyl-tRNA synthetase</keyword>
<keyword id="KW-0067">ATP-binding</keyword>
<keyword id="KW-0963">Cytoplasm</keyword>
<keyword id="KW-0436">Ligase</keyword>
<keyword id="KW-0547">Nucleotide-binding</keyword>
<keyword id="KW-0648">Protein biosynthesis</keyword>
<feature type="chain" id="PRO_1000215542" description="Proline--tRNA ligase">
    <location>
        <begin position="1"/>
        <end position="426"/>
    </location>
</feature>